<reference key="1">
    <citation type="journal article" date="2005" name="Nat. Biotechnol.">
        <title>The genome sequence of the ethanologenic bacterium Zymomonas mobilis ZM4.</title>
        <authorList>
            <person name="Seo J.-S."/>
            <person name="Chong H."/>
            <person name="Park H.S."/>
            <person name="Yoon K.-O."/>
            <person name="Jung C."/>
            <person name="Kim J.J."/>
            <person name="Hong J.H."/>
            <person name="Kim H."/>
            <person name="Kim J.-H."/>
            <person name="Kil J.-I."/>
            <person name="Park C.J."/>
            <person name="Oh H.-M."/>
            <person name="Lee J.-S."/>
            <person name="Jin S.-J."/>
            <person name="Um H.-W."/>
            <person name="Lee H.-J."/>
            <person name="Oh S.-J."/>
            <person name="Kim J.Y."/>
            <person name="Kang H.L."/>
            <person name="Lee S.Y."/>
            <person name="Lee K.J."/>
            <person name="Kang H.S."/>
        </authorList>
    </citation>
    <scope>NUCLEOTIDE SEQUENCE [LARGE SCALE GENOMIC DNA]</scope>
    <source>
        <strain>ATCC 31821 / ZM4 / CP4</strain>
    </source>
</reference>
<feature type="chain" id="PRO_0000181813" description="tRNA(Ile)-lysidine synthase">
    <location>
        <begin position="1"/>
        <end position="329"/>
    </location>
</feature>
<feature type="binding site" evidence="1">
    <location>
        <begin position="37"/>
        <end position="42"/>
    </location>
    <ligand>
        <name>ATP</name>
        <dbReference type="ChEBI" id="CHEBI:30616"/>
    </ligand>
</feature>
<protein>
    <recommendedName>
        <fullName evidence="1">tRNA(Ile)-lysidine synthase</fullName>
        <ecNumber evidence="1">6.3.4.19</ecNumber>
    </recommendedName>
    <alternativeName>
        <fullName evidence="1">tRNA(Ile)-2-lysyl-cytidine synthase</fullName>
    </alternativeName>
    <alternativeName>
        <fullName evidence="1">tRNA(Ile)-lysidine synthetase</fullName>
    </alternativeName>
</protein>
<dbReference type="EC" id="6.3.4.19" evidence="1"/>
<dbReference type="EMBL" id="AE008692">
    <property type="protein sequence ID" value="AAV90282.1"/>
    <property type="molecule type" value="Genomic_DNA"/>
</dbReference>
<dbReference type="RefSeq" id="WP_011241407.1">
    <property type="nucleotide sequence ID" value="NZ_CP035711.1"/>
</dbReference>
<dbReference type="SMR" id="Q5NLX8"/>
<dbReference type="STRING" id="264203.ZMO1658"/>
<dbReference type="KEGG" id="zmo:ZMO1658"/>
<dbReference type="eggNOG" id="COG0037">
    <property type="taxonomic scope" value="Bacteria"/>
</dbReference>
<dbReference type="HOGENOM" id="CLU_018869_3_0_5"/>
<dbReference type="Proteomes" id="UP000001173">
    <property type="component" value="Chromosome"/>
</dbReference>
<dbReference type="GO" id="GO:0005737">
    <property type="term" value="C:cytoplasm"/>
    <property type="evidence" value="ECO:0007669"/>
    <property type="project" value="UniProtKB-SubCell"/>
</dbReference>
<dbReference type="GO" id="GO:0005524">
    <property type="term" value="F:ATP binding"/>
    <property type="evidence" value="ECO:0007669"/>
    <property type="project" value="UniProtKB-UniRule"/>
</dbReference>
<dbReference type="GO" id="GO:0032267">
    <property type="term" value="F:tRNA(Ile)-lysidine synthase activity"/>
    <property type="evidence" value="ECO:0007669"/>
    <property type="project" value="UniProtKB-EC"/>
</dbReference>
<dbReference type="GO" id="GO:0006400">
    <property type="term" value="P:tRNA modification"/>
    <property type="evidence" value="ECO:0007669"/>
    <property type="project" value="UniProtKB-UniRule"/>
</dbReference>
<dbReference type="CDD" id="cd01992">
    <property type="entry name" value="TilS_N"/>
    <property type="match status" value="1"/>
</dbReference>
<dbReference type="Gene3D" id="3.40.50.620">
    <property type="entry name" value="HUPs"/>
    <property type="match status" value="1"/>
</dbReference>
<dbReference type="HAMAP" id="MF_01161">
    <property type="entry name" value="tRNA_Ile_lys_synt"/>
    <property type="match status" value="1"/>
</dbReference>
<dbReference type="InterPro" id="IPR014729">
    <property type="entry name" value="Rossmann-like_a/b/a_fold"/>
</dbReference>
<dbReference type="InterPro" id="IPR011063">
    <property type="entry name" value="TilS/TtcA_N"/>
</dbReference>
<dbReference type="InterPro" id="IPR012094">
    <property type="entry name" value="tRNA_Ile_lys_synt"/>
</dbReference>
<dbReference type="InterPro" id="IPR012795">
    <property type="entry name" value="tRNA_Ile_lys_synt_N"/>
</dbReference>
<dbReference type="NCBIfam" id="TIGR02432">
    <property type="entry name" value="lysidine_TilS_N"/>
    <property type="match status" value="1"/>
</dbReference>
<dbReference type="PANTHER" id="PTHR43033">
    <property type="entry name" value="TRNA(ILE)-LYSIDINE SYNTHASE-RELATED"/>
    <property type="match status" value="1"/>
</dbReference>
<dbReference type="PANTHER" id="PTHR43033:SF5">
    <property type="entry name" value="TRNA(ILE)-LYSIDINE SYNTHETASE"/>
    <property type="match status" value="1"/>
</dbReference>
<dbReference type="Pfam" id="PF01171">
    <property type="entry name" value="ATP_bind_3"/>
    <property type="match status" value="1"/>
</dbReference>
<dbReference type="SUPFAM" id="SSF52402">
    <property type="entry name" value="Adenine nucleotide alpha hydrolases-like"/>
    <property type="match status" value="1"/>
</dbReference>
<organism>
    <name type="scientific">Zymomonas mobilis subsp. mobilis (strain ATCC 31821 / ZM4 / CP4)</name>
    <dbReference type="NCBI Taxonomy" id="264203"/>
    <lineage>
        <taxon>Bacteria</taxon>
        <taxon>Pseudomonadati</taxon>
        <taxon>Pseudomonadota</taxon>
        <taxon>Alphaproteobacteria</taxon>
        <taxon>Sphingomonadales</taxon>
        <taxon>Zymomonadaceae</taxon>
        <taxon>Zymomonas</taxon>
    </lineage>
</organism>
<proteinExistence type="inferred from homology"/>
<keyword id="KW-0067">ATP-binding</keyword>
<keyword id="KW-0963">Cytoplasm</keyword>
<keyword id="KW-0436">Ligase</keyword>
<keyword id="KW-0547">Nucleotide-binding</keyword>
<keyword id="KW-1185">Reference proteome</keyword>
<keyword id="KW-0819">tRNA processing</keyword>
<name>TILS_ZYMMO</name>
<gene>
    <name evidence="1" type="primary">tilS</name>
    <name type="ordered locus">ZMO1658</name>
</gene>
<comment type="function">
    <text evidence="1">Ligates lysine onto the cytidine present at position 34 of the AUA codon-specific tRNA(Ile) that contains the anticodon CAU, in an ATP-dependent manner. Cytidine is converted to lysidine, thus changing the amino acid specificity of the tRNA from methionine to isoleucine.</text>
</comment>
<comment type="catalytic activity">
    <reaction evidence="1">
        <text>cytidine(34) in tRNA(Ile2) + L-lysine + ATP = lysidine(34) in tRNA(Ile2) + AMP + diphosphate + H(+)</text>
        <dbReference type="Rhea" id="RHEA:43744"/>
        <dbReference type="Rhea" id="RHEA-COMP:10625"/>
        <dbReference type="Rhea" id="RHEA-COMP:10670"/>
        <dbReference type="ChEBI" id="CHEBI:15378"/>
        <dbReference type="ChEBI" id="CHEBI:30616"/>
        <dbReference type="ChEBI" id="CHEBI:32551"/>
        <dbReference type="ChEBI" id="CHEBI:33019"/>
        <dbReference type="ChEBI" id="CHEBI:82748"/>
        <dbReference type="ChEBI" id="CHEBI:83665"/>
        <dbReference type="ChEBI" id="CHEBI:456215"/>
        <dbReference type="EC" id="6.3.4.19"/>
    </reaction>
</comment>
<comment type="subcellular location">
    <subcellularLocation>
        <location evidence="1">Cytoplasm</location>
    </subcellularLocation>
</comment>
<comment type="domain">
    <text>The N-terminal region contains the highly conserved SGGXDS motif, predicted to be a P-loop motif involved in ATP binding.</text>
</comment>
<comment type="similarity">
    <text evidence="1">Belongs to the tRNA(Ile)-lysidine synthase family.</text>
</comment>
<accession>Q5NLX8</accession>
<evidence type="ECO:0000255" key="1">
    <source>
        <dbReference type="HAMAP-Rule" id="MF_01161"/>
    </source>
</evidence>
<sequence length="329" mass="36295">MKGELRSLLLPELRLFNEAIKGILSSPLSGKLGIAVSGGSDSLALLLLGAVSDFPVEAVTVDHGMRPEAAEEARFVAQICQQIGVPHQILTTKIEANGEGMQAAARIRRYALMAEWAKEKNVGALMTAHHADDQAETFLMRAARGSGLNGLAAIRPDVVITAEGQKLRLLRPLLGFTRSALAEIVEKAGFTFVSDPSNDNPHYDRTHFRRLLKASPWINRQHIAEAARYCQQSEEAIEWITAKEAAARIRKKGEVLYLDPTELPIEILRRLVLRAMETITGNTALRGSALSRFIRSLQQGKKVMLADVIGQGGEYWRFYRAPPRKKAVL</sequence>